<protein>
    <recommendedName>
        <fullName>Triadin</fullName>
    </recommendedName>
</protein>
<organism>
    <name type="scientific">Mus musculus</name>
    <name type="common">Mouse</name>
    <dbReference type="NCBI Taxonomy" id="10090"/>
    <lineage>
        <taxon>Eukaryota</taxon>
        <taxon>Metazoa</taxon>
        <taxon>Chordata</taxon>
        <taxon>Craniata</taxon>
        <taxon>Vertebrata</taxon>
        <taxon>Euteleostomi</taxon>
        <taxon>Mammalia</taxon>
        <taxon>Eutheria</taxon>
        <taxon>Euarchontoglires</taxon>
        <taxon>Glires</taxon>
        <taxon>Rodentia</taxon>
        <taxon>Myomorpha</taxon>
        <taxon>Muroidea</taxon>
        <taxon>Muridae</taxon>
        <taxon>Murinae</taxon>
        <taxon>Mus</taxon>
        <taxon>Mus</taxon>
    </lineage>
</organism>
<name>TRDN_MOUSE</name>
<comment type="function">
    <text evidence="7 8 9">Contributes to the regulation of lumenal Ca2+ release via the sarcoplasmic reticulum calcium release channels RYR1 and RYR2, a key step in triggering skeletal and heart muscle contraction. Required for normal organization of the triad junction, where T-tubules and the sarcoplasmic reticulum terminal cisternae are in close contact. Required for normal skeletal muscle strength (PubMed:19843516). Plays a role in excitation-contraction coupling in the heart and in regulating the rate of heart beats.</text>
</comment>
<comment type="subunit">
    <text evidence="1 2">Homooligomer of variable subunit number; disulfide-linked. Interacts with CASQ1 and RYR1 in skeletal muscle. Interacts with CASQ2.</text>
</comment>
<comment type="subcellular location">
    <subcellularLocation>
        <location evidence="6">Sarcoplasmic reticulum membrane</location>
        <topology evidence="2">Single-pass type II membrane protein</topology>
    </subcellularLocation>
</comment>
<comment type="alternative products">
    <event type="alternative splicing"/>
    <isoform>
        <id>E9Q9K5-1</id>
        <name>1</name>
        <sequence type="displayed"/>
    </isoform>
    <isoform>
        <id>E9Q9K5-2</id>
        <name>2</name>
        <name>Cardiac triadin 1</name>
        <sequence type="described" ref="VSP_056796 VSP_056797"/>
    </isoform>
    <isoform>
        <id>E9Q9K5-3</id>
        <name>3</name>
        <name>Cardiac triadin 2</name>
        <sequence type="described" ref="VSP_056798 VSP_056799"/>
    </isoform>
    <isoform>
        <id>E9Q9K5-4</id>
        <name>4</name>
        <name>Cardiac triadin 3</name>
        <name>Trisk 32</name>
        <sequence type="described" ref="VSP_056795 VSP_056800 VSP_056801"/>
    </isoform>
</comment>
<comment type="tissue specificity">
    <text evidence="6 7 8">Detected in heart (at protein level). Detected in heart.</text>
</comment>
<comment type="PTM">
    <text evidence="2">Phosphorylated by CaMK2.</text>
</comment>
<comment type="PTM">
    <text evidence="7">N-glycosylated.</text>
</comment>
<comment type="disruption phenotype">
    <text evidence="7 8 9">Mice appear normal; they are viable and fertile but have reduced muscular strength, due to defects in the structure of the triad junction, where T-tubules and the sarcoplasmic reticulum terminal cisternae are in close contact. In mutant mice, about 25% of the triads are in oblique or longitudinal orientation, instead of the normal transversal orientation (PubMed:19843516). Similar structural defects are seen in the heart, leading to impaired excitation-contraction coupling. Mutant mice are subject to stress-induced ventricular tachycardia (PubMed:19383796).</text>
</comment>
<evidence type="ECO:0000250" key="1">
    <source>
        <dbReference type="UniProtKB" id="Q13061"/>
    </source>
</evidence>
<evidence type="ECO:0000250" key="2">
    <source>
        <dbReference type="UniProtKB" id="Q28820"/>
    </source>
</evidence>
<evidence type="ECO:0000250" key="3">
    <source>
        <dbReference type="UniProtKB" id="Q9QX75"/>
    </source>
</evidence>
<evidence type="ECO:0000255" key="4"/>
<evidence type="ECO:0000256" key="5">
    <source>
        <dbReference type="SAM" id="MobiDB-lite"/>
    </source>
</evidence>
<evidence type="ECO:0000269" key="6">
    <source>
    </source>
</evidence>
<evidence type="ECO:0000269" key="7">
    <source>
    </source>
</evidence>
<evidence type="ECO:0000269" key="8">
    <source>
    </source>
</evidence>
<evidence type="ECO:0000269" key="9">
    <source>
    </source>
</evidence>
<evidence type="ECO:0000305" key="10"/>
<evidence type="ECO:0000312" key="11">
    <source>
        <dbReference type="MGI" id="MGI:1924007"/>
    </source>
</evidence>
<gene>
    <name evidence="11" type="primary">Trdn</name>
</gene>
<feature type="chain" id="PRO_0000430562" description="Triadin">
    <location>
        <begin position="1"/>
        <end position="693"/>
    </location>
</feature>
<feature type="topological domain" description="Cytoplasmic" evidence="4">
    <location>
        <begin position="1"/>
        <end position="47"/>
    </location>
</feature>
<feature type="transmembrane region" description="Helical" evidence="4">
    <location>
        <begin position="48"/>
        <end position="68"/>
    </location>
</feature>
<feature type="topological domain" description="Lumenal" evidence="4">
    <location>
        <begin position="69"/>
        <end position="693"/>
    </location>
</feature>
<feature type="region of interest" description="Disordered" evidence="5">
    <location>
        <begin position="117"/>
        <end position="260"/>
    </location>
</feature>
<feature type="region of interest" description="Disordered" evidence="5">
    <location>
        <begin position="278"/>
        <end position="649"/>
    </location>
</feature>
<feature type="region of interest" description="Disordered" evidence="5">
    <location>
        <begin position="666"/>
        <end position="693"/>
    </location>
</feature>
<feature type="compositionally biased region" description="Acidic residues" evidence="5">
    <location>
        <begin position="117"/>
        <end position="130"/>
    </location>
</feature>
<feature type="compositionally biased region" description="Basic and acidic residues" evidence="5">
    <location>
        <begin position="131"/>
        <end position="241"/>
    </location>
</feature>
<feature type="compositionally biased region" description="Basic and acidic residues" evidence="5">
    <location>
        <begin position="249"/>
        <end position="260"/>
    </location>
</feature>
<feature type="compositionally biased region" description="Basic and acidic residues" evidence="5">
    <location>
        <begin position="305"/>
        <end position="352"/>
    </location>
</feature>
<feature type="compositionally biased region" description="Polar residues" evidence="5">
    <location>
        <begin position="354"/>
        <end position="364"/>
    </location>
</feature>
<feature type="compositionally biased region" description="Basic and acidic residues" evidence="5">
    <location>
        <begin position="366"/>
        <end position="427"/>
    </location>
</feature>
<feature type="compositionally biased region" description="Basic and acidic residues" evidence="5">
    <location>
        <begin position="438"/>
        <end position="502"/>
    </location>
</feature>
<feature type="compositionally biased region" description="Basic and acidic residues" evidence="5">
    <location>
        <begin position="526"/>
        <end position="547"/>
    </location>
</feature>
<feature type="compositionally biased region" description="Basic and acidic residues" evidence="5">
    <location>
        <begin position="558"/>
        <end position="579"/>
    </location>
</feature>
<feature type="compositionally biased region" description="Basic and acidic residues" evidence="5">
    <location>
        <begin position="587"/>
        <end position="637"/>
    </location>
</feature>
<feature type="compositionally biased region" description="Polar residues" evidence="5">
    <location>
        <begin position="672"/>
        <end position="693"/>
    </location>
</feature>
<feature type="modified residue" description="Phosphoserine" evidence="3">
    <location>
        <position position="301"/>
    </location>
</feature>
<feature type="glycosylation site" description="N-linked (GlcNAc...) asparagine" evidence="4">
    <location>
        <position position="515"/>
    </location>
</feature>
<feature type="glycosylation site" description="N-linked (GlcNAc...) asparagine" evidence="4">
    <location>
        <position position="584"/>
    </location>
</feature>
<feature type="disulfide bond" description="Interchain" evidence="2">
    <location>
        <position position="268"/>
    </location>
</feature>
<feature type="disulfide bond" description="Interchain" evidence="2">
    <location>
        <position position="655"/>
    </location>
</feature>
<feature type="splice variant" id="VSP_056795" description="In isoform 4." evidence="10">
    <location>
        <begin position="263"/>
        <end position="282"/>
    </location>
</feature>
<feature type="splice variant" id="VSP_056796" description="In isoform 2." evidence="10">
    <original>DQYAFCRYMIDMFVH</original>
    <variation>GKHSRRRRQQEVQRE</variation>
    <location>
        <begin position="263"/>
        <end position="277"/>
    </location>
</feature>
<feature type="splice variant" id="VSP_056797" description="In isoform 2." evidence="10">
    <location>
        <begin position="278"/>
        <end position="693"/>
    </location>
</feature>
<feature type="splice variant" id="VSP_056798" description="In isoform 3.">
    <original>QSPVMPPPSL</original>
    <variation>IPNNSYCCLS</variation>
    <location>
        <begin position="284"/>
        <end position="293"/>
    </location>
</feature>
<feature type="splice variant" id="VSP_056799" description="In isoform 3." evidence="10">
    <location>
        <begin position="294"/>
        <end position="693"/>
    </location>
</feature>
<feature type="splice variant" id="VSP_056800" description="In isoform 4." evidence="10">
    <original>EKEKEEKKKMEKKDTSDTK</original>
    <variation>GKYLVLWCFLPHKYFHYIF</variation>
    <location>
        <begin position="307"/>
        <end position="325"/>
    </location>
</feature>
<feature type="splice variant" id="VSP_056801" description="In isoform 4." evidence="10">
    <location>
        <begin position="326"/>
        <end position="693"/>
    </location>
</feature>
<feature type="sequence conflict" description="In Ref. 1; AAL33876/AAL33877/AAL33878." evidence="10" ref="1">
    <original>R</original>
    <variation>K</variation>
    <location>
        <position position="34"/>
    </location>
</feature>
<dbReference type="EMBL" id="AF223415">
    <property type="protein sequence ID" value="AAL33876.1"/>
    <property type="molecule type" value="mRNA"/>
</dbReference>
<dbReference type="EMBL" id="AF223416">
    <property type="protein sequence ID" value="AAL33877.1"/>
    <property type="molecule type" value="mRNA"/>
</dbReference>
<dbReference type="EMBL" id="AF223417">
    <property type="protein sequence ID" value="AAL33878.1"/>
    <property type="molecule type" value="mRNA"/>
</dbReference>
<dbReference type="EMBL" id="AC109214">
    <property type="status" value="NOT_ANNOTATED_CDS"/>
    <property type="molecule type" value="Genomic_DNA"/>
</dbReference>
<dbReference type="EMBL" id="AC153965">
    <property type="status" value="NOT_ANNOTATED_CDS"/>
    <property type="molecule type" value="Genomic_DNA"/>
</dbReference>
<dbReference type="EMBL" id="AC153966">
    <property type="status" value="NOT_ANNOTATED_CDS"/>
    <property type="molecule type" value="Genomic_DNA"/>
</dbReference>
<dbReference type="EMBL" id="AC157017">
    <property type="status" value="NOT_ANNOTATED_CDS"/>
    <property type="molecule type" value="Genomic_DNA"/>
</dbReference>
<dbReference type="EMBL" id="AK009816">
    <property type="protein sequence ID" value="BAB26520.1"/>
    <property type="molecule type" value="mRNA"/>
</dbReference>
<dbReference type="CCDS" id="CCDS48532.1">
    <molecule id="E9Q9K5-1"/>
</dbReference>
<dbReference type="CCDS" id="CCDS87985.1">
    <molecule id="E9Q9K5-3"/>
</dbReference>
<dbReference type="CCDS" id="CCDS87986.1">
    <molecule id="E9Q9K5-2"/>
</dbReference>
<dbReference type="RefSeq" id="NP_001351625.1">
    <molecule id="E9Q9K5-2"/>
    <property type="nucleotide sequence ID" value="NM_001364696.1"/>
</dbReference>
<dbReference type="RefSeq" id="NP_001351626.1">
    <molecule id="E9Q9K5-3"/>
    <property type="nucleotide sequence ID" value="NM_001364697.1"/>
</dbReference>
<dbReference type="RefSeq" id="NP_084002.2">
    <molecule id="E9Q9K5-1"/>
    <property type="nucleotide sequence ID" value="NM_029726.2"/>
</dbReference>
<dbReference type="BioGRID" id="218297">
    <property type="interactions" value="4"/>
</dbReference>
<dbReference type="FunCoup" id="E9Q9K5">
    <property type="interactions" value="261"/>
</dbReference>
<dbReference type="IntAct" id="E9Q9K5">
    <property type="interactions" value="1"/>
</dbReference>
<dbReference type="STRING" id="10090.ENSMUSP00000093436"/>
<dbReference type="GlyCosmos" id="E9Q9K5">
    <property type="glycosylation" value="2 sites, No reported glycans"/>
</dbReference>
<dbReference type="GlyGen" id="E9Q9K5">
    <property type="glycosylation" value="6 sites, 2 N-linked glycans (2 sites), 1 O-linked glycan (1 site)"/>
</dbReference>
<dbReference type="iPTMnet" id="E9Q9K5"/>
<dbReference type="PhosphoSitePlus" id="E9Q9K5"/>
<dbReference type="PaxDb" id="10090-ENSMUSP00000093436"/>
<dbReference type="ProteomicsDB" id="259306">
    <molecule id="E9Q9K5-1"/>
</dbReference>
<dbReference type="ProteomicsDB" id="259307">
    <molecule id="E9Q9K5-2"/>
</dbReference>
<dbReference type="ProteomicsDB" id="259308">
    <molecule id="E9Q9K5-3"/>
</dbReference>
<dbReference type="ProteomicsDB" id="259309">
    <molecule id="E9Q9K5-4"/>
</dbReference>
<dbReference type="Antibodypedia" id="51878">
    <property type="antibodies" value="49 antibodies from 12 providers"/>
</dbReference>
<dbReference type="DNASU" id="76757"/>
<dbReference type="Ensembl" id="ENSMUST00000095762.5">
    <molecule id="E9Q9K5-1"/>
    <property type="protein sequence ID" value="ENSMUSP00000093436.5"/>
    <property type="gene ID" value="ENSMUSG00000019787.10"/>
</dbReference>
<dbReference type="Ensembl" id="ENSMUST00000217779.2">
    <molecule id="E9Q9K5-3"/>
    <property type="protein sequence ID" value="ENSMUSP00000151583.2"/>
    <property type="gene ID" value="ENSMUSG00000019787.10"/>
</dbReference>
<dbReference type="Ensembl" id="ENSMUST00000219931.2">
    <molecule id="E9Q9K5-4"/>
    <property type="protein sequence ID" value="ENSMUSP00000151999.2"/>
    <property type="gene ID" value="ENSMUSG00000019787.10"/>
</dbReference>
<dbReference type="Ensembl" id="ENSMUST00000219982.2">
    <molecule id="E9Q9K5-2"/>
    <property type="protein sequence ID" value="ENSMUSP00000152042.2"/>
    <property type="gene ID" value="ENSMUSG00000019787.10"/>
</dbReference>
<dbReference type="GeneID" id="76757"/>
<dbReference type="KEGG" id="mmu:76757"/>
<dbReference type="UCSC" id="uc007etz.2">
    <molecule id="E9Q9K5-2"/>
    <property type="organism name" value="mouse"/>
</dbReference>
<dbReference type="UCSC" id="uc007eua.2">
    <molecule id="E9Q9K5-3"/>
    <property type="organism name" value="mouse"/>
</dbReference>
<dbReference type="UCSC" id="uc007eub.2">
    <molecule id="E9Q9K5-4"/>
    <property type="organism name" value="mouse"/>
</dbReference>
<dbReference type="UCSC" id="uc011xcl.1">
    <molecule id="E9Q9K5-1"/>
    <property type="organism name" value="mouse"/>
</dbReference>
<dbReference type="AGR" id="MGI:1924007"/>
<dbReference type="CTD" id="10345"/>
<dbReference type="MGI" id="MGI:1924007">
    <property type="gene designation" value="Trdn"/>
</dbReference>
<dbReference type="VEuPathDB" id="HostDB:ENSMUSG00000019787"/>
<dbReference type="eggNOG" id="ENOG502S0X4">
    <property type="taxonomic scope" value="Eukaryota"/>
</dbReference>
<dbReference type="GeneTree" id="ENSGT00510000049207"/>
<dbReference type="HOGENOM" id="CLU_023557_0_0_1"/>
<dbReference type="InParanoid" id="E9Q9K5"/>
<dbReference type="OMA" id="TQIHKQD"/>
<dbReference type="OrthoDB" id="9908116at2759"/>
<dbReference type="TreeFam" id="TF350396"/>
<dbReference type="Reactome" id="R-MMU-2672351">
    <property type="pathway name" value="Stimuli-sensing channels"/>
</dbReference>
<dbReference type="Reactome" id="R-MMU-5578775">
    <property type="pathway name" value="Ion homeostasis"/>
</dbReference>
<dbReference type="BioGRID-ORCS" id="76757">
    <property type="hits" value="2 hits in 77 CRISPR screens"/>
</dbReference>
<dbReference type="ChiTaRS" id="Trdn">
    <property type="organism name" value="mouse"/>
</dbReference>
<dbReference type="PRO" id="PR:E9Q9K5"/>
<dbReference type="Proteomes" id="UP000000589">
    <property type="component" value="Chromosome 10"/>
</dbReference>
<dbReference type="RNAct" id="E9Q9K5">
    <property type="molecule type" value="protein"/>
</dbReference>
<dbReference type="Bgee" id="ENSMUSG00000019787">
    <property type="expression patterns" value="Expressed in tarsal region and 103 other cell types or tissues"/>
</dbReference>
<dbReference type="ExpressionAtlas" id="E9Q9K5">
    <property type="expression patterns" value="baseline and differential"/>
</dbReference>
<dbReference type="GO" id="GO:0005829">
    <property type="term" value="C:cytosol"/>
    <property type="evidence" value="ECO:0007669"/>
    <property type="project" value="Ensembl"/>
</dbReference>
<dbReference type="GO" id="GO:0016020">
    <property type="term" value="C:membrane"/>
    <property type="evidence" value="ECO:0000304"/>
    <property type="project" value="MGI"/>
</dbReference>
<dbReference type="GO" id="GO:0005654">
    <property type="term" value="C:nucleoplasm"/>
    <property type="evidence" value="ECO:0007669"/>
    <property type="project" value="Ensembl"/>
</dbReference>
<dbReference type="GO" id="GO:0005886">
    <property type="term" value="C:plasma membrane"/>
    <property type="evidence" value="ECO:0007669"/>
    <property type="project" value="Ensembl"/>
</dbReference>
<dbReference type="GO" id="GO:0033017">
    <property type="term" value="C:sarcoplasmic reticulum membrane"/>
    <property type="evidence" value="ECO:0007669"/>
    <property type="project" value="UniProtKB-SubCell"/>
</dbReference>
<dbReference type="GO" id="GO:0005102">
    <property type="term" value="F:signaling receptor binding"/>
    <property type="evidence" value="ECO:0007669"/>
    <property type="project" value="InterPro"/>
</dbReference>
<dbReference type="GO" id="GO:0051649">
    <property type="term" value="P:establishment of localization in cell"/>
    <property type="evidence" value="ECO:0000315"/>
    <property type="project" value="MGI"/>
</dbReference>
<dbReference type="GO" id="GO:0060047">
    <property type="term" value="P:heart contraction"/>
    <property type="evidence" value="ECO:0000315"/>
    <property type="project" value="BHF-UCL"/>
</dbReference>
<dbReference type="GO" id="GO:0014808">
    <property type="term" value="P:release of sequestered calcium ion into cytosol by sarcoplasmic reticulum"/>
    <property type="evidence" value="ECO:0000315"/>
    <property type="project" value="MGI"/>
</dbReference>
<dbReference type="GO" id="GO:0009617">
    <property type="term" value="P:response to bacterium"/>
    <property type="evidence" value="ECO:0000270"/>
    <property type="project" value="MGI"/>
</dbReference>
<dbReference type="InterPro" id="IPR007943">
    <property type="entry name" value="Asp-B-hydro/Triadin_dom"/>
</dbReference>
<dbReference type="InterPro" id="IPR010798">
    <property type="entry name" value="Triadin"/>
</dbReference>
<dbReference type="PANTHER" id="PTHR14106">
    <property type="entry name" value="TRIADIN"/>
    <property type="match status" value="1"/>
</dbReference>
<dbReference type="PANTHER" id="PTHR14106:SF0">
    <property type="entry name" value="TRIADIN"/>
    <property type="match status" value="1"/>
</dbReference>
<dbReference type="Pfam" id="PF05279">
    <property type="entry name" value="Asp-B-Hydro_N"/>
    <property type="match status" value="1"/>
</dbReference>
<keyword id="KW-0025">Alternative splicing</keyword>
<keyword id="KW-1015">Disulfide bond</keyword>
<keyword id="KW-0325">Glycoprotein</keyword>
<keyword id="KW-0472">Membrane</keyword>
<keyword id="KW-0597">Phosphoprotein</keyword>
<keyword id="KW-1185">Reference proteome</keyword>
<keyword id="KW-0703">Sarcoplasmic reticulum</keyword>
<keyword id="KW-0812">Transmembrane</keyword>
<keyword id="KW-1133">Transmembrane helix</keyword>
<proteinExistence type="evidence at protein level"/>
<accession>E9Q9K5</accession>
<accession>Q8VIN7</accession>
<accession>Q8VIN8</accession>
<accession>Q8VIN9</accession>
<accession>Q9CV36</accession>
<reference key="1">
    <citation type="journal article" date="2001" name="Gene">
        <title>Molecular cloning and characterization of mouse cardiac triadin isoforms.</title>
        <authorList>
            <person name="Hong C.-S."/>
            <person name="Ji J.H."/>
            <person name="Kim J.P."/>
            <person name="Jung D.H."/>
            <person name="Kim D.H."/>
        </authorList>
    </citation>
    <scope>NUCLEOTIDE SEQUENCE [MRNA] (ISOFORMS 2; 3 AND 4)</scope>
    <scope>SUBCELLULAR LOCATION</scope>
    <scope>TISSUE SPECIFICITY</scope>
    <source>
        <strain>BALB/cJ</strain>
        <tissue>Heart</tissue>
    </source>
</reference>
<reference key="2">
    <citation type="journal article" date="2009" name="PLoS Biol.">
        <title>Lineage-specific biology revealed by a finished genome assembly of the mouse.</title>
        <authorList>
            <person name="Church D.M."/>
            <person name="Goodstadt L."/>
            <person name="Hillier L.W."/>
            <person name="Zody M.C."/>
            <person name="Goldstein S."/>
            <person name="She X."/>
            <person name="Bult C.J."/>
            <person name="Agarwala R."/>
            <person name="Cherry J.L."/>
            <person name="DiCuccio M."/>
            <person name="Hlavina W."/>
            <person name="Kapustin Y."/>
            <person name="Meric P."/>
            <person name="Maglott D."/>
            <person name="Birtle Z."/>
            <person name="Marques A.C."/>
            <person name="Graves T."/>
            <person name="Zhou S."/>
            <person name="Teague B."/>
            <person name="Potamousis K."/>
            <person name="Churas C."/>
            <person name="Place M."/>
            <person name="Herschleb J."/>
            <person name="Runnheim R."/>
            <person name="Forrest D."/>
            <person name="Amos-Landgraf J."/>
            <person name="Schwartz D.C."/>
            <person name="Cheng Z."/>
            <person name="Lindblad-Toh K."/>
            <person name="Eichler E.E."/>
            <person name="Ponting C.P."/>
        </authorList>
    </citation>
    <scope>NUCLEOTIDE SEQUENCE [LARGE SCALE GENOMIC DNA]</scope>
    <source>
        <strain>C57BL/6J</strain>
    </source>
</reference>
<reference key="3">
    <citation type="journal article" date="2005" name="Science">
        <title>The transcriptional landscape of the mammalian genome.</title>
        <authorList>
            <person name="Carninci P."/>
            <person name="Kasukawa T."/>
            <person name="Katayama S."/>
            <person name="Gough J."/>
            <person name="Frith M.C."/>
            <person name="Maeda N."/>
            <person name="Oyama R."/>
            <person name="Ravasi T."/>
            <person name="Lenhard B."/>
            <person name="Wells C."/>
            <person name="Kodzius R."/>
            <person name="Shimokawa K."/>
            <person name="Bajic V.B."/>
            <person name="Brenner S.E."/>
            <person name="Batalov S."/>
            <person name="Forrest A.R."/>
            <person name="Zavolan M."/>
            <person name="Davis M.J."/>
            <person name="Wilming L.G."/>
            <person name="Aidinis V."/>
            <person name="Allen J.E."/>
            <person name="Ambesi-Impiombato A."/>
            <person name="Apweiler R."/>
            <person name="Aturaliya R.N."/>
            <person name="Bailey T.L."/>
            <person name="Bansal M."/>
            <person name="Baxter L."/>
            <person name="Beisel K.W."/>
            <person name="Bersano T."/>
            <person name="Bono H."/>
            <person name="Chalk A.M."/>
            <person name="Chiu K.P."/>
            <person name="Choudhary V."/>
            <person name="Christoffels A."/>
            <person name="Clutterbuck D.R."/>
            <person name="Crowe M.L."/>
            <person name="Dalla E."/>
            <person name="Dalrymple B.P."/>
            <person name="de Bono B."/>
            <person name="Della Gatta G."/>
            <person name="di Bernardo D."/>
            <person name="Down T."/>
            <person name="Engstrom P."/>
            <person name="Fagiolini M."/>
            <person name="Faulkner G."/>
            <person name="Fletcher C.F."/>
            <person name="Fukushima T."/>
            <person name="Furuno M."/>
            <person name="Futaki S."/>
            <person name="Gariboldi M."/>
            <person name="Georgii-Hemming P."/>
            <person name="Gingeras T.R."/>
            <person name="Gojobori T."/>
            <person name="Green R.E."/>
            <person name="Gustincich S."/>
            <person name="Harbers M."/>
            <person name="Hayashi Y."/>
            <person name="Hensch T.K."/>
            <person name="Hirokawa N."/>
            <person name="Hill D."/>
            <person name="Huminiecki L."/>
            <person name="Iacono M."/>
            <person name="Ikeo K."/>
            <person name="Iwama A."/>
            <person name="Ishikawa T."/>
            <person name="Jakt M."/>
            <person name="Kanapin A."/>
            <person name="Katoh M."/>
            <person name="Kawasawa Y."/>
            <person name="Kelso J."/>
            <person name="Kitamura H."/>
            <person name="Kitano H."/>
            <person name="Kollias G."/>
            <person name="Krishnan S.P."/>
            <person name="Kruger A."/>
            <person name="Kummerfeld S.K."/>
            <person name="Kurochkin I.V."/>
            <person name="Lareau L.F."/>
            <person name="Lazarevic D."/>
            <person name="Lipovich L."/>
            <person name="Liu J."/>
            <person name="Liuni S."/>
            <person name="McWilliam S."/>
            <person name="Madan Babu M."/>
            <person name="Madera M."/>
            <person name="Marchionni L."/>
            <person name="Matsuda H."/>
            <person name="Matsuzawa S."/>
            <person name="Miki H."/>
            <person name="Mignone F."/>
            <person name="Miyake S."/>
            <person name="Morris K."/>
            <person name="Mottagui-Tabar S."/>
            <person name="Mulder N."/>
            <person name="Nakano N."/>
            <person name="Nakauchi H."/>
            <person name="Ng P."/>
            <person name="Nilsson R."/>
            <person name="Nishiguchi S."/>
            <person name="Nishikawa S."/>
            <person name="Nori F."/>
            <person name="Ohara O."/>
            <person name="Okazaki Y."/>
            <person name="Orlando V."/>
            <person name="Pang K.C."/>
            <person name="Pavan W.J."/>
            <person name="Pavesi G."/>
            <person name="Pesole G."/>
            <person name="Petrovsky N."/>
            <person name="Piazza S."/>
            <person name="Reed J."/>
            <person name="Reid J.F."/>
            <person name="Ring B.Z."/>
            <person name="Ringwald M."/>
            <person name="Rost B."/>
            <person name="Ruan Y."/>
            <person name="Salzberg S.L."/>
            <person name="Sandelin A."/>
            <person name="Schneider C."/>
            <person name="Schoenbach C."/>
            <person name="Sekiguchi K."/>
            <person name="Semple C.A."/>
            <person name="Seno S."/>
            <person name="Sessa L."/>
            <person name="Sheng Y."/>
            <person name="Shibata Y."/>
            <person name="Shimada H."/>
            <person name="Shimada K."/>
            <person name="Silva D."/>
            <person name="Sinclair B."/>
            <person name="Sperling S."/>
            <person name="Stupka E."/>
            <person name="Sugiura K."/>
            <person name="Sultana R."/>
            <person name="Takenaka Y."/>
            <person name="Taki K."/>
            <person name="Tammoja K."/>
            <person name="Tan S.L."/>
            <person name="Tang S."/>
            <person name="Taylor M.S."/>
            <person name="Tegner J."/>
            <person name="Teichmann S.A."/>
            <person name="Ueda H.R."/>
            <person name="van Nimwegen E."/>
            <person name="Verardo R."/>
            <person name="Wei C.L."/>
            <person name="Yagi K."/>
            <person name="Yamanishi H."/>
            <person name="Zabarovsky E."/>
            <person name="Zhu S."/>
            <person name="Zimmer A."/>
            <person name="Hide W."/>
            <person name="Bult C."/>
            <person name="Grimmond S.M."/>
            <person name="Teasdale R.D."/>
            <person name="Liu E.T."/>
            <person name="Brusic V."/>
            <person name="Quackenbush J."/>
            <person name="Wahlestedt C."/>
            <person name="Mattick J.S."/>
            <person name="Hume D.A."/>
            <person name="Kai C."/>
            <person name="Sasaki D."/>
            <person name="Tomaru Y."/>
            <person name="Fukuda S."/>
            <person name="Kanamori-Katayama M."/>
            <person name="Suzuki M."/>
            <person name="Aoki J."/>
            <person name="Arakawa T."/>
            <person name="Iida J."/>
            <person name="Imamura K."/>
            <person name="Itoh M."/>
            <person name="Kato T."/>
            <person name="Kawaji H."/>
            <person name="Kawagashira N."/>
            <person name="Kawashima T."/>
            <person name="Kojima M."/>
            <person name="Kondo S."/>
            <person name="Konno H."/>
            <person name="Nakano K."/>
            <person name="Ninomiya N."/>
            <person name="Nishio T."/>
            <person name="Okada M."/>
            <person name="Plessy C."/>
            <person name="Shibata K."/>
            <person name="Shiraki T."/>
            <person name="Suzuki S."/>
            <person name="Tagami M."/>
            <person name="Waki K."/>
            <person name="Watahiki A."/>
            <person name="Okamura-Oho Y."/>
            <person name="Suzuki H."/>
            <person name="Kawai J."/>
            <person name="Hayashizaki Y."/>
        </authorList>
    </citation>
    <scope>NUCLEOTIDE SEQUENCE [LARGE SCALE MRNA] OF 1-190</scope>
    <source>
        <strain>C57BL/6J</strain>
        <tissue>Tongue</tissue>
    </source>
</reference>
<reference key="4">
    <citation type="journal article" date="2009" name="J. Biol. Chem.">
        <title>Triadin deletion induces impaired skeletal muscle function.</title>
        <authorList>
            <person name="Oddoux S."/>
            <person name="Brocard J."/>
            <person name="Schweitzer A."/>
            <person name="Szentesi P."/>
            <person name="Giannesini B."/>
            <person name="Brocard J."/>
            <person name="Faure J."/>
            <person name="Pernet-Gallay K."/>
            <person name="Bendahan D."/>
            <person name="Lunardi J."/>
            <person name="Csernoch L."/>
            <person name="Marty I."/>
        </authorList>
    </citation>
    <scope>DISRUPTION PHENOTYPE</scope>
    <scope>FUNCTION</scope>
    <scope>TISSUE SPECIFICITY</scope>
    <scope>ALTERNATIVE SPLICING</scope>
</reference>
<reference key="5">
    <citation type="journal article" date="2009" name="Proc. Natl. Acad. Sci. U.S.A.">
        <title>Ablation of triadin causes loss of cardiac Ca2+ release units, impaired excitation-contraction coupling, and cardiac arrhythmias.</title>
        <authorList>
            <person name="Chopra N."/>
            <person name="Yang T."/>
            <person name="Asghari P."/>
            <person name="Moore E.D."/>
            <person name="Huke S."/>
            <person name="Akin B."/>
            <person name="Cattolica R.A."/>
            <person name="Perez C.F."/>
            <person name="Hlaing T."/>
            <person name="Knollmann-Ritschel B.E."/>
            <person name="Jones L.R."/>
            <person name="Pessah I.N."/>
            <person name="Allen P.D."/>
            <person name="Franzini-Armstrong C."/>
            <person name="Knollmann B.C."/>
        </authorList>
    </citation>
    <scope>DISRUPTION PHENOTYPE</scope>
    <scope>FUNCTION</scope>
    <scope>GLYCOSYLATION</scope>
    <scope>TISSUE SPECIFICITY</scope>
</reference>
<reference key="6">
    <citation type="journal article" date="2012" name="PLoS ONE">
        <title>Triadin/junctin double null mouse reveals a differential role for triadin and junctin in anchoring CASQ to the jSR and regulating Ca(2+) homeostasis.</title>
        <authorList>
            <person name="Boncompagni S."/>
            <person name="Thomas M."/>
            <person name="Lopez J.R."/>
            <person name="Allen P.D."/>
            <person name="Yuan Q."/>
            <person name="Kranias E.G."/>
            <person name="Franzini-Armstrong C."/>
            <person name="Perez C.F."/>
        </authorList>
    </citation>
    <scope>DISRUPTION PHENOTYPE</scope>
    <scope>FUNCTION</scope>
</reference>
<sequence length="693" mass="77844">MTEITAEGNASTTTTVIDNKNGCIPKSPGKVLKRSVTEDIVTTFSSPAAWLLVIALIITWSAVAIVMFDLVDYKNFSASSIAKIGSDPLKLVNDAVEETTDWIYGFFSLLSDIISSEGDEDDEDADEDIDKGEIEEPPLKRKEIHQEKAEKEEKPEKKIQTKASHREREKGKEKLKGEKPEKTATHKEKLEKKERPETKMMAKEDKKIKTKEKTEEKAKKEMKVGKQEKVKPTAAKAKETPKTPPKARKKDDKEMPAVHEQKDQYAFCRYMIDMFVHGDLKPGQSPVMPPPSLTPSKPALSTTALEEKEKEEKKKMEKKDTSDTKKKEKEVKKKSEETTIDGKGKEPGKPPETKQMTAKLTTQAAARKDEKKEESKKMRKPTEEQPKGKKQEKKEKHIEPAKTPKKEHPGPSEKLKKAKAEQAKEEIAAASTKKALHGKKEEKAKTVEQEVKKEKSGKSSSDLKDKEVKKEKSGKSSSDLKDKEPQLKNEEKSKPQVKKEAKLASSDKGQTRKQNITRPEQVIPHVKPEKAEHQEKGHPSIKKDKPKPSSKGAPEVPDSGKKKIEKSEKESKVPTREENLQVYNVTKAEKPGKIPKDSKEAPASKKDKEDSKEAPTSKKDKEDSKDVPHSKKDKEVTDDVSSPKKQTRPISFFQCVYLNGYNGYGFQFPVTPVQQPGENPGKTNSPGQKQQEQ</sequence>